<organism>
    <name type="scientific">Macaca fascicularis</name>
    <name type="common">Crab-eating macaque</name>
    <name type="synonym">Cynomolgus monkey</name>
    <dbReference type="NCBI Taxonomy" id="9541"/>
    <lineage>
        <taxon>Eukaryota</taxon>
        <taxon>Metazoa</taxon>
        <taxon>Chordata</taxon>
        <taxon>Craniata</taxon>
        <taxon>Vertebrata</taxon>
        <taxon>Euteleostomi</taxon>
        <taxon>Mammalia</taxon>
        <taxon>Eutheria</taxon>
        <taxon>Euarchontoglires</taxon>
        <taxon>Primates</taxon>
        <taxon>Haplorrhini</taxon>
        <taxon>Catarrhini</taxon>
        <taxon>Cercopithecidae</taxon>
        <taxon>Cercopithecinae</taxon>
        <taxon>Macaca</taxon>
    </lineage>
</organism>
<proteinExistence type="evidence at transcript level"/>
<dbReference type="EMBL" id="AB125179">
    <property type="protein sequence ID" value="BAD51967.1"/>
    <property type="molecule type" value="mRNA"/>
</dbReference>
<dbReference type="RefSeq" id="NP_001270027.1">
    <property type="nucleotide sequence ID" value="NM_001283098.1"/>
</dbReference>
<dbReference type="SMR" id="Q60HE8"/>
<dbReference type="STRING" id="9541.ENSMFAP00000004039"/>
<dbReference type="GlyCosmos" id="Q60HE8">
    <property type="glycosylation" value="1 site, No reported glycans"/>
</dbReference>
<dbReference type="eggNOG" id="KOG3733">
    <property type="taxonomic scope" value="Eukaryota"/>
</dbReference>
<dbReference type="Proteomes" id="UP000233100">
    <property type="component" value="Unplaced"/>
</dbReference>
<dbReference type="GO" id="GO:0042995">
    <property type="term" value="C:cell projection"/>
    <property type="evidence" value="ECO:0007669"/>
    <property type="project" value="UniProtKB-KW"/>
</dbReference>
<dbReference type="GO" id="GO:0005770">
    <property type="term" value="C:late endosome"/>
    <property type="evidence" value="ECO:0000250"/>
    <property type="project" value="UniProtKB"/>
</dbReference>
<dbReference type="GO" id="GO:0031902">
    <property type="term" value="C:late endosome membrane"/>
    <property type="evidence" value="ECO:0007669"/>
    <property type="project" value="UniProtKB-SubCell"/>
</dbReference>
<dbReference type="GO" id="GO:0005765">
    <property type="term" value="C:lysosomal membrane"/>
    <property type="evidence" value="ECO:0000250"/>
    <property type="project" value="UniProtKB"/>
</dbReference>
<dbReference type="GO" id="GO:0005764">
    <property type="term" value="C:lysosome"/>
    <property type="evidence" value="ECO:0000250"/>
    <property type="project" value="UniProtKB"/>
</dbReference>
<dbReference type="GO" id="GO:0016020">
    <property type="term" value="C:membrane"/>
    <property type="evidence" value="ECO:0000250"/>
    <property type="project" value="UniProtKB"/>
</dbReference>
<dbReference type="GO" id="GO:0001891">
    <property type="term" value="C:phagocytic cup"/>
    <property type="evidence" value="ECO:0007669"/>
    <property type="project" value="UniProtKB-SubCell"/>
</dbReference>
<dbReference type="GO" id="GO:0030670">
    <property type="term" value="C:phagocytic vesicle membrane"/>
    <property type="evidence" value="ECO:0007669"/>
    <property type="project" value="UniProtKB-SubCell"/>
</dbReference>
<dbReference type="GO" id="GO:0005262">
    <property type="term" value="F:calcium channel activity"/>
    <property type="evidence" value="ECO:0000250"/>
    <property type="project" value="UniProtKB"/>
</dbReference>
<dbReference type="GO" id="GO:0097682">
    <property type="term" value="F:intracellularly phosphatidylinositol-3,5-bisphosphate-gated monatomic cation channel activity"/>
    <property type="evidence" value="ECO:0000250"/>
    <property type="project" value="UniProtKB"/>
</dbReference>
<dbReference type="GO" id="GO:0005381">
    <property type="term" value="F:iron ion transmembrane transporter activity"/>
    <property type="evidence" value="ECO:0000250"/>
    <property type="project" value="UniProtKB"/>
</dbReference>
<dbReference type="GO" id="GO:0008289">
    <property type="term" value="F:lipid binding"/>
    <property type="evidence" value="ECO:0007669"/>
    <property type="project" value="UniProtKB-KW"/>
</dbReference>
<dbReference type="GO" id="GO:0005253">
    <property type="term" value="F:monoatomic anion channel activity"/>
    <property type="evidence" value="ECO:0000250"/>
    <property type="project" value="UniProtKB"/>
</dbReference>
<dbReference type="GO" id="GO:0072345">
    <property type="term" value="F:NAADP-sensitive calcium-release channel activity"/>
    <property type="evidence" value="ECO:0007669"/>
    <property type="project" value="TreeGrafter"/>
</dbReference>
<dbReference type="GO" id="GO:0005267">
    <property type="term" value="F:potassium channel activity"/>
    <property type="evidence" value="ECO:0000250"/>
    <property type="project" value="UniProtKB"/>
</dbReference>
<dbReference type="GO" id="GO:0005272">
    <property type="term" value="F:sodium channel activity"/>
    <property type="evidence" value="ECO:0000250"/>
    <property type="project" value="UniProtKB"/>
</dbReference>
<dbReference type="GO" id="GO:0002250">
    <property type="term" value="P:adaptive immune response"/>
    <property type="evidence" value="ECO:0007669"/>
    <property type="project" value="UniProtKB-KW"/>
</dbReference>
<dbReference type="GO" id="GO:1901660">
    <property type="term" value="P:calcium ion export"/>
    <property type="evidence" value="ECO:0000250"/>
    <property type="project" value="UniProtKB"/>
</dbReference>
<dbReference type="GO" id="GO:0071277">
    <property type="term" value="P:cellular response to calcium ion"/>
    <property type="evidence" value="ECO:0000250"/>
    <property type="project" value="UniProtKB"/>
</dbReference>
<dbReference type="GO" id="GO:0071467">
    <property type="term" value="P:cellular response to pH"/>
    <property type="evidence" value="ECO:0000250"/>
    <property type="project" value="UniProtKB"/>
</dbReference>
<dbReference type="GO" id="GO:0034755">
    <property type="term" value="P:iron ion transmembrane transport"/>
    <property type="evidence" value="ECO:0000250"/>
    <property type="project" value="UniProtKB"/>
</dbReference>
<dbReference type="GO" id="GO:0098655">
    <property type="term" value="P:monoatomic cation transmembrane transport"/>
    <property type="evidence" value="ECO:0000250"/>
    <property type="project" value="UniProtKB"/>
</dbReference>
<dbReference type="GO" id="GO:1905673">
    <property type="term" value="P:positive regulation of lysosome organization"/>
    <property type="evidence" value="ECO:0000250"/>
    <property type="project" value="UniProtKB"/>
</dbReference>
<dbReference type="GO" id="GO:0051289">
    <property type="term" value="P:protein homotetramerization"/>
    <property type="evidence" value="ECO:0000250"/>
    <property type="project" value="UniProtKB"/>
</dbReference>
<dbReference type="CDD" id="cd21070">
    <property type="entry name" value="ELD_TRPML1"/>
    <property type="match status" value="1"/>
</dbReference>
<dbReference type="FunFam" id="1.10.287.70:FF:000033">
    <property type="entry name" value="Mucolipin 1"/>
    <property type="match status" value="1"/>
</dbReference>
<dbReference type="Gene3D" id="1.10.287.70">
    <property type="match status" value="1"/>
</dbReference>
<dbReference type="InterPro" id="IPR049134">
    <property type="entry name" value="MCLN_ECD"/>
</dbReference>
<dbReference type="InterPro" id="IPR047316">
    <property type="entry name" value="ML1_ELD"/>
</dbReference>
<dbReference type="InterPro" id="IPR039031">
    <property type="entry name" value="Mucolipin"/>
</dbReference>
<dbReference type="InterPro" id="IPR013122">
    <property type="entry name" value="PKD1_2_channel"/>
</dbReference>
<dbReference type="PANTHER" id="PTHR12127">
    <property type="entry name" value="MUCOLIPIN"/>
    <property type="match status" value="1"/>
</dbReference>
<dbReference type="PANTHER" id="PTHR12127:SF6">
    <property type="entry name" value="MUCOLIPIN-1"/>
    <property type="match status" value="1"/>
</dbReference>
<dbReference type="Pfam" id="PF21381">
    <property type="entry name" value="MCLN_ECD"/>
    <property type="match status" value="1"/>
</dbReference>
<dbReference type="Pfam" id="PF08016">
    <property type="entry name" value="PKD_channel"/>
    <property type="match status" value="1"/>
</dbReference>
<feature type="chain" id="PRO_0000215363" description="Mucolipin-1">
    <location>
        <begin position="1"/>
        <end position="580"/>
    </location>
</feature>
<feature type="topological domain" description="Cytoplasmic" evidence="2">
    <location>
        <begin position="1"/>
        <end position="65"/>
    </location>
</feature>
<feature type="transmembrane region" description="Helical; Name=1" evidence="2">
    <location>
        <begin position="66"/>
        <end position="86"/>
    </location>
</feature>
<feature type="topological domain" description="Extracellular" evidence="2">
    <location>
        <begin position="87"/>
        <end position="298"/>
    </location>
</feature>
<feature type="transmembrane region" description="Helical; Name=2" evidence="2">
    <location>
        <begin position="299"/>
        <end position="321"/>
    </location>
</feature>
<feature type="topological domain" description="Cytoplasmic" evidence="2">
    <location>
        <begin position="322"/>
        <end position="350"/>
    </location>
</feature>
<feature type="transmembrane region" description="Helical; Name=3" evidence="2">
    <location>
        <begin position="351"/>
        <end position="371"/>
    </location>
</feature>
<feature type="topological domain" description="Extracellular" evidence="2">
    <location>
        <begin position="372"/>
        <end position="382"/>
    </location>
</feature>
<feature type="transmembrane region" description="Helical; Name=4" evidence="2">
    <location>
        <begin position="383"/>
        <end position="405"/>
    </location>
</feature>
<feature type="topological domain" description="Cytoplasmic" evidence="2">
    <location>
        <begin position="406"/>
        <end position="427"/>
    </location>
</feature>
<feature type="transmembrane region" description="Helical; Name=5" evidence="2">
    <location>
        <begin position="428"/>
        <end position="448"/>
    </location>
</feature>
<feature type="topological domain" description="Extracellular" evidence="2">
    <location>
        <begin position="449"/>
        <end position="456"/>
    </location>
</feature>
<feature type="intramembrane region" description="Pore-forming" evidence="2">
    <location>
        <begin position="457"/>
        <end position="477"/>
    </location>
</feature>
<feature type="topological domain" description="Extracellular" evidence="2">
    <location>
        <begin position="478"/>
        <end position="491"/>
    </location>
</feature>
<feature type="transmembrane region" description="Helical; Name=6" evidence="2">
    <location>
        <begin position="492"/>
        <end position="513"/>
    </location>
</feature>
<feature type="topological domain" description="Cytoplasmic" evidence="2">
    <location>
        <begin position="514"/>
        <end position="580"/>
    </location>
</feature>
<feature type="region of interest" description="Disordered" evidence="4">
    <location>
        <begin position="1"/>
        <end position="38"/>
    </location>
</feature>
<feature type="region of interest" description="Interaction with phosphoinositides" evidence="2">
    <location>
        <begin position="42"/>
        <end position="62"/>
    </location>
</feature>
<feature type="region of interest" description="Extracellular/lumenal pore loop" evidence="2">
    <location>
        <begin position="107"/>
        <end position="121"/>
    </location>
</feature>
<feature type="region of interest" description="Required for palmitoylation and association with membranes" evidence="2">
    <location>
        <begin position="565"/>
        <end position="567"/>
    </location>
</feature>
<feature type="short sequence motif" description="Dileucine motif; mediates targeting to lysosomes" evidence="2">
    <location>
        <begin position="11"/>
        <end position="16"/>
    </location>
</feature>
<feature type="short sequence motif" description="Selectivity filter" evidence="2">
    <location>
        <begin position="469"/>
        <end position="474"/>
    </location>
</feature>
<feature type="short sequence motif" description="Dileucine internalization motif; mediates AP2 complex-dependent internalization" evidence="2">
    <location>
        <begin position="573"/>
        <end position="578"/>
    </location>
</feature>
<feature type="modified residue" description="Phosphoserine" evidence="1">
    <location>
        <position position="10"/>
    </location>
</feature>
<feature type="modified residue" description="Phosphoserine; by PAK" evidence="2">
    <location>
        <position position="557"/>
    </location>
</feature>
<feature type="modified residue" description="Phosphoserine; by PAK" evidence="2">
    <location>
        <position position="559"/>
    </location>
</feature>
<feature type="glycosylation site" description="N-linked (GlcNAc...) asparagine" evidence="3">
    <location>
        <position position="230"/>
    </location>
</feature>
<feature type="disulfide bond" evidence="2">
    <location>
        <begin position="166"/>
        <end position="192"/>
    </location>
</feature>
<feature type="disulfide bond" evidence="2">
    <location>
        <begin position="253"/>
        <end position="284"/>
    </location>
</feature>
<protein>
    <recommendedName>
        <fullName>Mucolipin-1</fullName>
    </recommendedName>
    <alternativeName>
        <fullName>Mucolipidin</fullName>
    </alternativeName>
    <alternativeName>
        <fullName>Transient receptor potential channel mucolipin 1</fullName>
        <shortName>TRPML1</shortName>
    </alternativeName>
</protein>
<sequence length="580" mass="65203">MTDPAGPRGSETERLLTPNPGYGTQVGPSPAPPTPPEEEDLRRRLKYFFMSPCDKFRAKGRKPCKLMLQVVKILVVTVQLILFGLSNQLAVTFREENTIAFRHLFLLGYSDGADDTFAAYTQEQLYQAIFHAVDQYLALPDVSLGRYAYVHGGGDPWTNGSGLALCQRYYHRGHVDPANDTFDIDPMVVTDCIQVDPPERPPPSPSDDLALLEGSSSYKNLTLKFHKLVNVTIHFRLKTINLQSLINNEIPDCYTFSVLITFDNKAHSGRIPISLETQAHIQECKHPSVFRHGDNSFRLLFDVVVILTCSLSFLLCARSLLRGFLLQNEFVRFMWRQRRRVISLWERLEFVNGWYILLVTSDVLTISGTIMKIGIEAKNLASYDVCSILLGTSTLLVWVGVIRYLTFFHNYNILIATLRVALPSVMRFCCCVAVIYLGYCFCGWIVLGPYHVKFRSLSMVSECLFSLINGDDMFVTFAAMQAQQGRSSLVWLFSQLYLYSFISLFIYMVLSLFIALITGAYDTIKHPGGAGAEESELQAYIAQCQDSPTSGKFRRGSGSACSLLCCCGRDPSEEHSLLVN</sequence>
<gene>
    <name type="primary">MCOLN1</name>
    <name type="ORF">QorA-13738</name>
</gene>
<keyword id="KW-1064">Adaptive immunity</keyword>
<keyword id="KW-0106">Calcium</keyword>
<keyword id="KW-0109">Calcium transport</keyword>
<keyword id="KW-1003">Cell membrane</keyword>
<keyword id="KW-0966">Cell projection</keyword>
<keyword id="KW-0968">Cytoplasmic vesicle</keyword>
<keyword id="KW-1015">Disulfide bond</keyword>
<keyword id="KW-0967">Endosome</keyword>
<keyword id="KW-0325">Glycoprotein</keyword>
<keyword id="KW-0391">Immunity</keyword>
<keyword id="KW-0407">Ion channel</keyword>
<keyword id="KW-0406">Ion transport</keyword>
<keyword id="KW-0446">Lipid-binding</keyword>
<keyword id="KW-0458">Lysosome</keyword>
<keyword id="KW-0472">Membrane</keyword>
<keyword id="KW-0597">Phosphoprotein</keyword>
<keyword id="KW-1185">Reference proteome</keyword>
<keyword id="KW-0812">Transmembrane</keyword>
<keyword id="KW-1133">Transmembrane helix</keyword>
<keyword id="KW-0813">Transport</keyword>
<evidence type="ECO:0000250" key="1">
    <source>
        <dbReference type="UniProtKB" id="Q99J21"/>
    </source>
</evidence>
<evidence type="ECO:0000250" key="2">
    <source>
        <dbReference type="UniProtKB" id="Q9GZU1"/>
    </source>
</evidence>
<evidence type="ECO:0000255" key="3"/>
<evidence type="ECO:0000256" key="4">
    <source>
        <dbReference type="SAM" id="MobiDB-lite"/>
    </source>
</evidence>
<evidence type="ECO:0000305" key="5"/>
<name>MCLN1_MACFA</name>
<reference key="1">
    <citation type="submission" date="2003-10" db="EMBL/GenBank/DDBJ databases">
        <title>Isolation and characterization of cDNA for macaque neurological disease genes.</title>
        <authorList>
            <person name="Kusuda J."/>
            <person name="Osada N."/>
            <person name="Tanuma R."/>
            <person name="Hirata M."/>
            <person name="Sugano S."/>
            <person name="Hashimoto K."/>
        </authorList>
    </citation>
    <scope>NUCLEOTIDE SEQUENCE [LARGE SCALE MRNA]</scope>
    <source>
        <tissue>Occipital cortex</tissue>
    </source>
</reference>
<comment type="function">
    <text evidence="1 2">Nonselective cation channel probably playing a role in the regulation of membrane trafficking events and of metal homeostasis. Acts as a Ca(2+)-permeable cation channel with inwardly rectifying activity. Proposed to play a major role in Ca(2+) release from late endosome and lysosome vesicles to the cytoplasm, which is important for many lysosome-dependent cellular events, including the fusion and trafficking of these organelles, exocytosis and autophagy. Required for efficient uptake of large particles in macrophages in which Ca(2+) release from the lysosomes triggers lysosomal exocytosis. May also play a role in phagosome-lysosome fusion. Involved in lactosylceramide trafficking indicative for a role in the regulation of late endocytic membrane fusion/fission events. By mediating lysosomal Ca(2+) release is involved in regulation of mTORC1 signaling and in mTOR/TFEB-dependent lysosomal adaptation to environmental cues such as nutrient levels. Seems to act as lysosomal active oxygen species (ROS) sensor involved in ROS-induced TFEB activation and autophagy. Also functions as a Fe(2+) permeable channel in late endosomes and lysosomes. Also permeable to Mg(2+), Na(+). K(+) and Cs(+). Proposed to play a role in zinc homeostasis probably implicating its association with TMEM163. In adaptive immunity, TRPML2 and TRPML1 may play redundant roles in the function of the specialized lysosomes of B cells.</text>
</comment>
<comment type="function">
    <text evidence="2">May contribute to cellular lipase activity within the late endosomal pathway or at the cell surface which may be involved in processes of membrane reshaping and vesiculation, especially the growth of tubular structures. However, it is not known, whether it conveys the enzymatic activity directly, or merely facilitates the activity of an associated phospholipase.</text>
</comment>
<comment type="catalytic activity">
    <reaction evidence="2">
        <text>Ca(2+)(in) = Ca(2+)(out)</text>
        <dbReference type="Rhea" id="RHEA:29671"/>
        <dbReference type="ChEBI" id="CHEBI:29108"/>
    </reaction>
</comment>
<comment type="catalytic activity">
    <reaction evidence="2">
        <text>Fe(2+)(in) = Fe(2+)(out)</text>
        <dbReference type="Rhea" id="RHEA:28486"/>
        <dbReference type="ChEBI" id="CHEBI:29033"/>
    </reaction>
</comment>
<comment type="catalytic activity">
    <reaction evidence="1">
        <text>Mg(2+)(in) = Mg(2+)(out)</text>
        <dbReference type="Rhea" id="RHEA:29827"/>
        <dbReference type="ChEBI" id="CHEBI:18420"/>
    </reaction>
</comment>
<comment type="catalytic activity">
    <reaction evidence="1">
        <text>K(+)(in) = K(+)(out)</text>
        <dbReference type="Rhea" id="RHEA:29463"/>
        <dbReference type="ChEBI" id="CHEBI:29103"/>
    </reaction>
</comment>
<comment type="catalytic activity">
    <reaction evidence="1">
        <text>Na(+)(in) = Na(+)(out)</text>
        <dbReference type="Rhea" id="RHEA:34963"/>
        <dbReference type="ChEBI" id="CHEBI:29101"/>
    </reaction>
</comment>
<comment type="activity regulation">
    <text evidence="2">Channel activity is controlled by multiple regulatory mechanisms in different subcellular compartments. Channel function is transiently modulated by changes in Ca(2+) in a pH-dependent manner; pH changes modify the aggregation state of unitary channels; a negative cooperativity between extracellular/lumenal Ca(2+) and H(+) is suggested. Regulated by phosphoinositides in a compartment-specific manner: in lysosomes activated by PtdIns(3,5)P2 (Phosphatidylinositol 3,5-bisphosphate) and at the plasma membrane inhibited by PtdIns(4,5)P2 (Phosphatidylinositol 4,5-bisphosphate).</text>
</comment>
<comment type="subunit">
    <text evidence="2">Homotetramer. Homooligomer. Can heterooligomerize with MCOLN2 or MCOLN3; heteromeric assemblies have different channel properties as compared to the respective homooligomers and may be tissue-specific. Interacts with PDCD6. Interacts with TMEM163. Interacts with LAPTM4B.</text>
</comment>
<comment type="subcellular location">
    <subcellularLocation>
        <location evidence="2">Late endosome membrane</location>
        <topology evidence="2">Multi-pass membrane protein</topology>
    </subcellularLocation>
    <subcellularLocation>
        <location evidence="2">Lysosome membrane</location>
        <topology evidence="2">Multi-pass membrane protein</topology>
    </subcellularLocation>
    <subcellularLocation>
        <location evidence="2">Cytoplasmic vesicle membrane</location>
        <topology evidence="2">Multi-pass membrane protein</topology>
    </subcellularLocation>
    <subcellularLocation>
        <location evidence="1">Cell projection</location>
        <location evidence="1">Phagocytic cup</location>
    </subcellularLocation>
    <subcellularLocation>
        <location evidence="1">Cytoplasmic vesicle</location>
        <location evidence="1">Phagosome membrane</location>
        <topology evidence="2">Multi-pass membrane protein</topology>
    </subcellularLocation>
    <subcellularLocation>
        <location evidence="2">Cell membrane</location>
        <topology evidence="2">Multi-pass membrane protein</topology>
    </subcellularLocation>
    <text evidence="2">Delivery from the trans-Golgi to lysosomes seems to occur mainly in a direct intracellular manner without intermediate delivery to the plasma membrane. Under normal conditions, restricted to intracellular compartments so that only a very minor proportion is present at the cell membrane.</text>
</comment>
<comment type="domain">
    <text evidence="2">The most N-terminal extracellular/lumenal domain (referred to as I-II linker or polycystin-mucolipin domain) contributes to a structure with a four-fold rotational symmetry in a tetrameric assembly; the structure contains a central highly electronegative pore with a 14 A diameter. The pore is critical for Ca(2+) and pH regulation. The protruding structure formed by the I-II linkers may contain all the interaction sites with lipids and proteins in the endolysosomal lumen.</text>
</comment>
<comment type="PTM">
    <text evidence="2">Palmitoylated; involved in association with membranes.</text>
</comment>
<comment type="PTM">
    <text evidence="2">Phosphorylation by PKA inhibits channel activity. Dephosphorylation increases activity.</text>
</comment>
<comment type="PTM">
    <text evidence="2">Proteolytically cleaved probably involving multiple lysosomal proteases including cathepsin B; inhibits lysosomal channel activity.</text>
</comment>
<comment type="similarity">
    <text evidence="5">Belongs to the transient receptor (TC 1.A.4) family. Polycystin subfamily. MCOLN1 sub-subfamily.</text>
</comment>
<accession>Q60HE8</accession>